<protein>
    <recommendedName>
        <fullName evidence="3">Scolopendrasin-9</fullName>
    </recommendedName>
    <alternativeName>
        <fullName evidence="2">Scolopendrasin IX</fullName>
    </alternativeName>
</protein>
<dbReference type="GO" id="GO:0005576">
    <property type="term" value="C:extracellular region"/>
    <property type="evidence" value="ECO:0007669"/>
    <property type="project" value="UniProtKB-SubCell"/>
</dbReference>
<dbReference type="GO" id="GO:0090729">
    <property type="term" value="F:toxin activity"/>
    <property type="evidence" value="ECO:0007669"/>
    <property type="project" value="UniProtKB-KW"/>
</dbReference>
<sequence>MCKYFIKIVSKSAKK</sequence>
<comment type="function">
    <text evidence="1">Anti-inflammatory peptide. By activating the G-protein coupled receptor formyl peptide receptor 2 (FPR2), this peptide markedly activates neutrophils, resulting in cytosolic calcium increase, superoxide anion production, and chemotactic cellular migration. In vivo, when tested on a auto-antibody-injected model, its administration strongly blocks the clinical phenotype of rheumatoid arthritis (RA). Mechanistically, this peptide inhibits inflammatory cytokine synthesis from the joints and neutrophil recruitment into the joint area. It may serve as a novel potential therapeutic agent for the control of RA via FPR2.</text>
</comment>
<comment type="subcellular location">
    <subcellularLocation>
        <location evidence="3">Secreted</location>
    </subcellularLocation>
</comment>
<comment type="tissue specificity">
    <text evidence="3">Expressed by the venom gland.</text>
</comment>
<reference key="1">
    <citation type="journal article" date="2018" name="Sci. Rep.">
        <title>A novel antimicrobial peptide acting via formyl peptide receptor 2 shows therapeutic effects against rheumatoid arthritis.</title>
        <authorList>
            <person name="Park Y.J."/>
            <person name="Park B."/>
            <person name="Lee M."/>
            <person name="Jeong Y.S."/>
            <person name="Lee H.Y."/>
            <person name="Sohn D.H."/>
            <person name="Song J.J."/>
            <person name="Lee J.H."/>
            <person name="Hwang J.S."/>
            <person name="Bae Y.S."/>
        </authorList>
    </citation>
    <scope>FUNCTION</scope>
    <scope>PROBABLE AMIDATION AT LYS-15</scope>
    <scope>SYNTHESIS</scope>
</reference>
<proteinExistence type="evidence at protein level"/>
<evidence type="ECO:0000269" key="1">
    <source>
    </source>
</evidence>
<evidence type="ECO:0000303" key="2">
    <source>
    </source>
</evidence>
<evidence type="ECO:0000305" key="3"/>
<evidence type="ECO:0000305" key="4">
    <source>
    </source>
</evidence>
<accession>P0DV64</accession>
<feature type="peptide" id="PRO_0000455217" description="Scolopendrasin-9" evidence="4">
    <location>
        <begin position="1"/>
        <end position="15"/>
    </location>
</feature>
<feature type="modified residue" description="Lysine amide" evidence="1">
    <location>
        <position position="15"/>
    </location>
</feature>
<keyword id="KW-0027">Amidation</keyword>
<keyword id="KW-1213">G-protein coupled receptor impairing toxin</keyword>
<keyword id="KW-0964">Secreted</keyword>
<keyword id="KW-0800">Toxin</keyword>
<organism>
    <name type="scientific">Scolopendra mutilans</name>
    <name type="common">Chinese red-headed centipede</name>
    <name type="synonym">Scolopendra subspinipes mutilans</name>
    <dbReference type="NCBI Taxonomy" id="2836329"/>
    <lineage>
        <taxon>Eukaryota</taxon>
        <taxon>Metazoa</taxon>
        <taxon>Ecdysozoa</taxon>
        <taxon>Arthropoda</taxon>
        <taxon>Myriapoda</taxon>
        <taxon>Chilopoda</taxon>
        <taxon>Pleurostigmophora</taxon>
        <taxon>Scolopendromorpha</taxon>
        <taxon>Scolopendridae</taxon>
        <taxon>Scolopendra</taxon>
    </lineage>
</organism>
<name>AIP9_SCOMU</name>